<protein>
    <recommendedName>
        <fullName evidence="1">tRNA (guanine-N(1)-)-methyltransferase</fullName>
        <ecNumber evidence="1">2.1.1.228</ecNumber>
    </recommendedName>
    <alternativeName>
        <fullName evidence="1">M1G-methyltransferase</fullName>
    </alternativeName>
    <alternativeName>
        <fullName evidence="1">tRNA [GM37] methyltransferase</fullName>
    </alternativeName>
</protein>
<accession>B9DRW6</accession>
<proteinExistence type="inferred from homology"/>
<name>TRMD_STRU0</name>
<evidence type="ECO:0000255" key="1">
    <source>
        <dbReference type="HAMAP-Rule" id="MF_00605"/>
    </source>
</evidence>
<comment type="function">
    <text evidence="1">Specifically methylates guanosine-37 in various tRNAs.</text>
</comment>
<comment type="catalytic activity">
    <reaction evidence="1">
        <text>guanosine(37) in tRNA + S-adenosyl-L-methionine = N(1)-methylguanosine(37) in tRNA + S-adenosyl-L-homocysteine + H(+)</text>
        <dbReference type="Rhea" id="RHEA:36899"/>
        <dbReference type="Rhea" id="RHEA-COMP:10145"/>
        <dbReference type="Rhea" id="RHEA-COMP:10147"/>
        <dbReference type="ChEBI" id="CHEBI:15378"/>
        <dbReference type="ChEBI" id="CHEBI:57856"/>
        <dbReference type="ChEBI" id="CHEBI:59789"/>
        <dbReference type="ChEBI" id="CHEBI:73542"/>
        <dbReference type="ChEBI" id="CHEBI:74269"/>
        <dbReference type="EC" id="2.1.1.228"/>
    </reaction>
</comment>
<comment type="subunit">
    <text evidence="1">Homodimer.</text>
</comment>
<comment type="subcellular location">
    <subcellularLocation>
        <location evidence="1">Cytoplasm</location>
    </subcellularLocation>
</comment>
<comment type="similarity">
    <text evidence="1">Belongs to the RNA methyltransferase TrmD family.</text>
</comment>
<organism>
    <name type="scientific">Streptococcus uberis (strain ATCC BAA-854 / 0140J)</name>
    <dbReference type="NCBI Taxonomy" id="218495"/>
    <lineage>
        <taxon>Bacteria</taxon>
        <taxon>Bacillati</taxon>
        <taxon>Bacillota</taxon>
        <taxon>Bacilli</taxon>
        <taxon>Lactobacillales</taxon>
        <taxon>Streptococcaceae</taxon>
        <taxon>Streptococcus</taxon>
    </lineage>
</organism>
<sequence length="238" mass="27241">MKIDILTLFPEMFAPLESSIVGKAVEKGLLDIRYHNFRDNAEKARHVDDEPYGGGQGMLLRAQPIYDTIDKIDANNPRVILLDPAGKTFNQSYAEELAQEDELIFICGHYEGYDERIKQLVTDEISLGDFVLTGGELAAMTMVDATVRLIPNVIGKEASHQDDSFSSGLLEYPQYTRPYDFRGMTVPDVLMSGHHENIRRWRLEESLRKTYLRRPDLLEKYPLNQEESDLLAKIKEEM</sequence>
<feature type="chain" id="PRO_1000198591" description="tRNA (guanine-N(1)-)-methyltransferase">
    <location>
        <begin position="1"/>
        <end position="238"/>
    </location>
</feature>
<feature type="binding site" evidence="1">
    <location>
        <position position="108"/>
    </location>
    <ligand>
        <name>S-adenosyl-L-methionine</name>
        <dbReference type="ChEBI" id="CHEBI:59789"/>
    </ligand>
</feature>
<feature type="binding site" evidence="1">
    <location>
        <begin position="127"/>
        <end position="132"/>
    </location>
    <ligand>
        <name>S-adenosyl-L-methionine</name>
        <dbReference type="ChEBI" id="CHEBI:59789"/>
    </ligand>
</feature>
<gene>
    <name evidence="1" type="primary">trmD</name>
    <name type="ordered locus">SUB0744</name>
</gene>
<reference key="1">
    <citation type="journal article" date="2009" name="BMC Genomics">
        <title>Evidence for niche adaptation in the genome of the bovine pathogen Streptococcus uberis.</title>
        <authorList>
            <person name="Ward P.N."/>
            <person name="Holden M.T.G."/>
            <person name="Leigh J.A."/>
            <person name="Lennard N."/>
            <person name="Bignell A."/>
            <person name="Barron A."/>
            <person name="Clark L."/>
            <person name="Quail M.A."/>
            <person name="Woodward J."/>
            <person name="Barrell B.G."/>
            <person name="Egan S.A."/>
            <person name="Field T.R."/>
            <person name="Maskell D."/>
            <person name="Kehoe M."/>
            <person name="Dowson C.G."/>
            <person name="Chanter N."/>
            <person name="Whatmore A.M."/>
            <person name="Bentley S.D."/>
            <person name="Parkhill J."/>
        </authorList>
    </citation>
    <scope>NUCLEOTIDE SEQUENCE [LARGE SCALE GENOMIC DNA]</scope>
    <source>
        <strain>ATCC BAA-854 / 0140J</strain>
    </source>
</reference>
<dbReference type="EC" id="2.1.1.228" evidence="1"/>
<dbReference type="EMBL" id="AM946015">
    <property type="protein sequence ID" value="CAR41679.1"/>
    <property type="molecule type" value="Genomic_DNA"/>
</dbReference>
<dbReference type="RefSeq" id="WP_012658261.1">
    <property type="nucleotide sequence ID" value="NC_012004.1"/>
</dbReference>
<dbReference type="SMR" id="B9DRW6"/>
<dbReference type="STRING" id="218495.SUB0744"/>
<dbReference type="KEGG" id="sub:SUB0744"/>
<dbReference type="eggNOG" id="COG0336">
    <property type="taxonomic scope" value="Bacteria"/>
</dbReference>
<dbReference type="HOGENOM" id="CLU_047363_0_1_9"/>
<dbReference type="OrthoDB" id="9807416at2"/>
<dbReference type="Proteomes" id="UP000000449">
    <property type="component" value="Chromosome"/>
</dbReference>
<dbReference type="GO" id="GO:0005829">
    <property type="term" value="C:cytosol"/>
    <property type="evidence" value="ECO:0007669"/>
    <property type="project" value="TreeGrafter"/>
</dbReference>
<dbReference type="GO" id="GO:0052906">
    <property type="term" value="F:tRNA (guanine(37)-N1)-methyltransferase activity"/>
    <property type="evidence" value="ECO:0007669"/>
    <property type="project" value="UniProtKB-UniRule"/>
</dbReference>
<dbReference type="GO" id="GO:0002939">
    <property type="term" value="P:tRNA N1-guanine methylation"/>
    <property type="evidence" value="ECO:0007669"/>
    <property type="project" value="TreeGrafter"/>
</dbReference>
<dbReference type="CDD" id="cd18080">
    <property type="entry name" value="TrmD-like"/>
    <property type="match status" value="1"/>
</dbReference>
<dbReference type="FunFam" id="1.10.1270.20:FF:000001">
    <property type="entry name" value="tRNA (guanine-N(1)-)-methyltransferase"/>
    <property type="match status" value="1"/>
</dbReference>
<dbReference type="FunFam" id="3.40.1280.10:FF:000001">
    <property type="entry name" value="tRNA (guanine-N(1)-)-methyltransferase"/>
    <property type="match status" value="1"/>
</dbReference>
<dbReference type="Gene3D" id="3.40.1280.10">
    <property type="match status" value="1"/>
</dbReference>
<dbReference type="Gene3D" id="1.10.1270.20">
    <property type="entry name" value="tRNA(m1g37)methyltransferase, domain 2"/>
    <property type="match status" value="1"/>
</dbReference>
<dbReference type="HAMAP" id="MF_00605">
    <property type="entry name" value="TrmD"/>
    <property type="match status" value="1"/>
</dbReference>
<dbReference type="InterPro" id="IPR029028">
    <property type="entry name" value="Alpha/beta_knot_MTases"/>
</dbReference>
<dbReference type="InterPro" id="IPR023148">
    <property type="entry name" value="tRNA_m1G_MeTrfase_C_sf"/>
</dbReference>
<dbReference type="InterPro" id="IPR002649">
    <property type="entry name" value="tRNA_m1G_MeTrfase_TrmD"/>
</dbReference>
<dbReference type="InterPro" id="IPR029026">
    <property type="entry name" value="tRNA_m1G_MTases_N"/>
</dbReference>
<dbReference type="InterPro" id="IPR016009">
    <property type="entry name" value="tRNA_MeTrfase_TRMD/TRM10"/>
</dbReference>
<dbReference type="NCBIfam" id="NF000648">
    <property type="entry name" value="PRK00026.1"/>
    <property type="match status" value="1"/>
</dbReference>
<dbReference type="NCBIfam" id="TIGR00088">
    <property type="entry name" value="trmD"/>
    <property type="match status" value="1"/>
</dbReference>
<dbReference type="PANTHER" id="PTHR46417">
    <property type="entry name" value="TRNA (GUANINE-N(1)-)-METHYLTRANSFERASE"/>
    <property type="match status" value="1"/>
</dbReference>
<dbReference type="PANTHER" id="PTHR46417:SF1">
    <property type="entry name" value="TRNA (GUANINE-N(1)-)-METHYLTRANSFERASE"/>
    <property type="match status" value="1"/>
</dbReference>
<dbReference type="Pfam" id="PF01746">
    <property type="entry name" value="tRNA_m1G_MT"/>
    <property type="match status" value="1"/>
</dbReference>
<dbReference type="PIRSF" id="PIRSF000386">
    <property type="entry name" value="tRNA_mtase"/>
    <property type="match status" value="1"/>
</dbReference>
<dbReference type="SUPFAM" id="SSF75217">
    <property type="entry name" value="alpha/beta knot"/>
    <property type="match status" value="1"/>
</dbReference>
<keyword id="KW-0963">Cytoplasm</keyword>
<keyword id="KW-0489">Methyltransferase</keyword>
<keyword id="KW-1185">Reference proteome</keyword>
<keyword id="KW-0949">S-adenosyl-L-methionine</keyword>
<keyword id="KW-0808">Transferase</keyword>
<keyword id="KW-0819">tRNA processing</keyword>